<dbReference type="EMBL" id="BA000043">
    <property type="protein sequence ID" value="BAD76782.1"/>
    <property type="molecule type" value="Genomic_DNA"/>
</dbReference>
<dbReference type="RefSeq" id="WP_008879912.1">
    <property type="nucleotide sequence ID" value="NC_006510.1"/>
</dbReference>
<dbReference type="SMR" id="Q5KX04"/>
<dbReference type="STRING" id="235909.GK2497"/>
<dbReference type="GeneID" id="89611304"/>
<dbReference type="KEGG" id="gka:GK2497"/>
<dbReference type="eggNOG" id="COG0828">
    <property type="taxonomic scope" value="Bacteria"/>
</dbReference>
<dbReference type="HOGENOM" id="CLU_159258_3_2_9"/>
<dbReference type="Proteomes" id="UP000001172">
    <property type="component" value="Chromosome"/>
</dbReference>
<dbReference type="GO" id="GO:1990904">
    <property type="term" value="C:ribonucleoprotein complex"/>
    <property type="evidence" value="ECO:0007669"/>
    <property type="project" value="UniProtKB-KW"/>
</dbReference>
<dbReference type="GO" id="GO:0005840">
    <property type="term" value="C:ribosome"/>
    <property type="evidence" value="ECO:0007669"/>
    <property type="project" value="UniProtKB-KW"/>
</dbReference>
<dbReference type="GO" id="GO:0003735">
    <property type="term" value="F:structural constituent of ribosome"/>
    <property type="evidence" value="ECO:0007669"/>
    <property type="project" value="InterPro"/>
</dbReference>
<dbReference type="GO" id="GO:0006412">
    <property type="term" value="P:translation"/>
    <property type="evidence" value="ECO:0007669"/>
    <property type="project" value="UniProtKB-UniRule"/>
</dbReference>
<dbReference type="Gene3D" id="1.20.5.1150">
    <property type="entry name" value="Ribosomal protein S8"/>
    <property type="match status" value="1"/>
</dbReference>
<dbReference type="HAMAP" id="MF_00358">
    <property type="entry name" value="Ribosomal_bS21"/>
    <property type="match status" value="1"/>
</dbReference>
<dbReference type="InterPro" id="IPR001911">
    <property type="entry name" value="Ribosomal_bS21"/>
</dbReference>
<dbReference type="InterPro" id="IPR018278">
    <property type="entry name" value="Ribosomal_bS21_CS"/>
</dbReference>
<dbReference type="InterPro" id="IPR038380">
    <property type="entry name" value="Ribosomal_bS21_sf"/>
</dbReference>
<dbReference type="NCBIfam" id="TIGR00030">
    <property type="entry name" value="S21p"/>
    <property type="match status" value="1"/>
</dbReference>
<dbReference type="PANTHER" id="PTHR21109">
    <property type="entry name" value="MITOCHONDRIAL 28S RIBOSOMAL PROTEIN S21"/>
    <property type="match status" value="1"/>
</dbReference>
<dbReference type="PANTHER" id="PTHR21109:SF22">
    <property type="entry name" value="SMALL RIBOSOMAL SUBUNIT PROTEIN BS21"/>
    <property type="match status" value="1"/>
</dbReference>
<dbReference type="Pfam" id="PF01165">
    <property type="entry name" value="Ribosomal_S21"/>
    <property type="match status" value="1"/>
</dbReference>
<dbReference type="PRINTS" id="PR00976">
    <property type="entry name" value="RIBOSOMALS21"/>
</dbReference>
<dbReference type="PROSITE" id="PS01181">
    <property type="entry name" value="RIBOSOMAL_S21"/>
    <property type="match status" value="1"/>
</dbReference>
<reference key="1">
    <citation type="journal article" date="2004" name="Nucleic Acids Res.">
        <title>Thermoadaptation trait revealed by the genome sequence of thermophilic Geobacillus kaustophilus.</title>
        <authorList>
            <person name="Takami H."/>
            <person name="Takaki Y."/>
            <person name="Chee G.-J."/>
            <person name="Nishi S."/>
            <person name="Shimamura S."/>
            <person name="Suzuki H."/>
            <person name="Matsui S."/>
            <person name="Uchiyama I."/>
        </authorList>
    </citation>
    <scope>NUCLEOTIDE SEQUENCE [LARGE SCALE GENOMIC DNA]</scope>
    <source>
        <strain>HTA426</strain>
    </source>
</reference>
<sequence length="57" mass="6860">MSKTIVRKNESIDDALRRFKRAVSKTGTLQEVRKREFYEKPSVRRKKKSEAARKRKH</sequence>
<evidence type="ECO:0000255" key="1">
    <source>
        <dbReference type="HAMAP-Rule" id="MF_00358"/>
    </source>
</evidence>
<evidence type="ECO:0000305" key="2"/>
<feature type="chain" id="PRO_0000178337" description="Small ribosomal subunit protein bS21">
    <location>
        <begin position="1"/>
        <end position="57"/>
    </location>
</feature>
<keyword id="KW-1185">Reference proteome</keyword>
<keyword id="KW-0687">Ribonucleoprotein</keyword>
<keyword id="KW-0689">Ribosomal protein</keyword>
<organism>
    <name type="scientific">Geobacillus kaustophilus (strain HTA426)</name>
    <dbReference type="NCBI Taxonomy" id="235909"/>
    <lineage>
        <taxon>Bacteria</taxon>
        <taxon>Bacillati</taxon>
        <taxon>Bacillota</taxon>
        <taxon>Bacilli</taxon>
        <taxon>Bacillales</taxon>
        <taxon>Anoxybacillaceae</taxon>
        <taxon>Geobacillus</taxon>
        <taxon>Geobacillus thermoleovorans group</taxon>
    </lineage>
</organism>
<gene>
    <name evidence="1" type="primary">rpsU</name>
    <name type="ordered locus">GK2497</name>
</gene>
<name>RS21_GEOKA</name>
<accession>Q5KX04</accession>
<proteinExistence type="inferred from homology"/>
<comment type="similarity">
    <text evidence="1">Belongs to the bacterial ribosomal protein bS21 family.</text>
</comment>
<protein>
    <recommendedName>
        <fullName evidence="1">Small ribosomal subunit protein bS21</fullName>
    </recommendedName>
    <alternativeName>
        <fullName evidence="2">30S ribosomal protein S21</fullName>
    </alternativeName>
</protein>